<organism>
    <name type="scientific">Escherichia coli O157:H7</name>
    <dbReference type="NCBI Taxonomy" id="83334"/>
    <lineage>
        <taxon>Bacteria</taxon>
        <taxon>Pseudomonadati</taxon>
        <taxon>Pseudomonadota</taxon>
        <taxon>Gammaproteobacteria</taxon>
        <taxon>Enterobacterales</taxon>
        <taxon>Enterobacteriaceae</taxon>
        <taxon>Escherichia</taxon>
    </lineage>
</organism>
<evidence type="ECO:0000250" key="1"/>
<evidence type="ECO:0000255" key="2"/>
<evidence type="ECO:0000305" key="3"/>
<gene>
    <name type="primary">lolC</name>
    <name type="ordered locus">Z1757</name>
    <name type="ordered locus">ECs1494</name>
</gene>
<reference key="1">
    <citation type="journal article" date="2001" name="Nature">
        <title>Genome sequence of enterohaemorrhagic Escherichia coli O157:H7.</title>
        <authorList>
            <person name="Perna N.T."/>
            <person name="Plunkett G. III"/>
            <person name="Burland V."/>
            <person name="Mau B."/>
            <person name="Glasner J.D."/>
            <person name="Rose D.J."/>
            <person name="Mayhew G.F."/>
            <person name="Evans P.S."/>
            <person name="Gregor J."/>
            <person name="Kirkpatrick H.A."/>
            <person name="Posfai G."/>
            <person name="Hackett J."/>
            <person name="Klink S."/>
            <person name="Boutin A."/>
            <person name="Shao Y."/>
            <person name="Miller L."/>
            <person name="Grotbeck E.J."/>
            <person name="Davis N.W."/>
            <person name="Lim A."/>
            <person name="Dimalanta E.T."/>
            <person name="Potamousis K."/>
            <person name="Apodaca J."/>
            <person name="Anantharaman T.S."/>
            <person name="Lin J."/>
            <person name="Yen G."/>
            <person name="Schwartz D.C."/>
            <person name="Welch R.A."/>
            <person name="Blattner F.R."/>
        </authorList>
    </citation>
    <scope>NUCLEOTIDE SEQUENCE [LARGE SCALE GENOMIC DNA]</scope>
    <source>
        <strain>O157:H7 / EDL933 / ATCC 700927 / EHEC</strain>
    </source>
</reference>
<reference key="2">
    <citation type="journal article" date="2001" name="DNA Res.">
        <title>Complete genome sequence of enterohemorrhagic Escherichia coli O157:H7 and genomic comparison with a laboratory strain K-12.</title>
        <authorList>
            <person name="Hayashi T."/>
            <person name="Makino K."/>
            <person name="Ohnishi M."/>
            <person name="Kurokawa K."/>
            <person name="Ishii K."/>
            <person name="Yokoyama K."/>
            <person name="Han C.-G."/>
            <person name="Ohtsubo E."/>
            <person name="Nakayama K."/>
            <person name="Murata T."/>
            <person name="Tanaka M."/>
            <person name="Tobe T."/>
            <person name="Iida T."/>
            <person name="Takami H."/>
            <person name="Honda T."/>
            <person name="Sasakawa C."/>
            <person name="Ogasawara N."/>
            <person name="Yasunaga T."/>
            <person name="Kuhara S."/>
            <person name="Shiba T."/>
            <person name="Hattori M."/>
            <person name="Shinagawa H."/>
        </authorList>
    </citation>
    <scope>NUCLEOTIDE SEQUENCE [LARGE SCALE GENOMIC DNA]</scope>
    <source>
        <strain>O157:H7 / Sakai / RIMD 0509952 / EHEC</strain>
    </source>
</reference>
<protein>
    <recommendedName>
        <fullName>Lipoprotein-releasing system transmembrane protein LolC</fullName>
    </recommendedName>
</protein>
<accession>P0ADC5</accession>
<accession>P75956</accession>
<accession>Q9R7N7</accession>
<keyword id="KW-0997">Cell inner membrane</keyword>
<keyword id="KW-1003">Cell membrane</keyword>
<keyword id="KW-0472">Membrane</keyword>
<keyword id="KW-1185">Reference proteome</keyword>
<keyword id="KW-0812">Transmembrane</keyword>
<keyword id="KW-1133">Transmembrane helix</keyword>
<keyword id="KW-0813">Transport</keyword>
<feature type="chain" id="PRO_0000201811" description="Lipoprotein-releasing system transmembrane protein LolC">
    <location>
        <begin position="1"/>
        <end position="399"/>
    </location>
</feature>
<feature type="transmembrane region" description="Helical" evidence="2">
    <location>
        <begin position="25"/>
        <end position="45"/>
    </location>
</feature>
<feature type="transmembrane region" description="Helical" evidence="2">
    <location>
        <begin position="270"/>
        <end position="290"/>
    </location>
</feature>
<feature type="transmembrane region" description="Helical" evidence="2">
    <location>
        <begin position="310"/>
        <end position="330"/>
    </location>
</feature>
<feature type="transmembrane region" description="Helical" evidence="2">
    <location>
        <begin position="358"/>
        <end position="378"/>
    </location>
</feature>
<dbReference type="EMBL" id="AE005174">
    <property type="protein sequence ID" value="AAG55862.1"/>
    <property type="molecule type" value="Genomic_DNA"/>
</dbReference>
<dbReference type="EMBL" id="BA000007">
    <property type="protein sequence ID" value="BAB34917.1"/>
    <property type="molecule type" value="Genomic_DNA"/>
</dbReference>
<dbReference type="PIR" id="B85675">
    <property type="entry name" value="B85675"/>
</dbReference>
<dbReference type="PIR" id="F90815">
    <property type="entry name" value="F90815"/>
</dbReference>
<dbReference type="RefSeq" id="NP_309521.1">
    <property type="nucleotide sequence ID" value="NC_002695.1"/>
</dbReference>
<dbReference type="RefSeq" id="WP_000284714.1">
    <property type="nucleotide sequence ID" value="NZ_VOAI01000018.1"/>
</dbReference>
<dbReference type="SMR" id="P0ADC5"/>
<dbReference type="STRING" id="155864.Z1757"/>
<dbReference type="GeneID" id="912675"/>
<dbReference type="GeneID" id="93776292"/>
<dbReference type="KEGG" id="ece:Z1757"/>
<dbReference type="KEGG" id="ecs:ECs_1494"/>
<dbReference type="PATRIC" id="fig|386585.9.peg.1596"/>
<dbReference type="eggNOG" id="COG4591">
    <property type="taxonomic scope" value="Bacteria"/>
</dbReference>
<dbReference type="HOGENOM" id="CLU_000604_8_1_6"/>
<dbReference type="OMA" id="QIMAVFM"/>
<dbReference type="Proteomes" id="UP000000558">
    <property type="component" value="Chromosome"/>
</dbReference>
<dbReference type="Proteomes" id="UP000002519">
    <property type="component" value="Chromosome"/>
</dbReference>
<dbReference type="GO" id="GO:0098797">
    <property type="term" value="C:plasma membrane protein complex"/>
    <property type="evidence" value="ECO:0007669"/>
    <property type="project" value="TreeGrafter"/>
</dbReference>
<dbReference type="GO" id="GO:0044874">
    <property type="term" value="P:lipoprotein localization to outer membrane"/>
    <property type="evidence" value="ECO:0007669"/>
    <property type="project" value="TreeGrafter"/>
</dbReference>
<dbReference type="GO" id="GO:0042953">
    <property type="term" value="P:lipoprotein transport"/>
    <property type="evidence" value="ECO:0007669"/>
    <property type="project" value="InterPro"/>
</dbReference>
<dbReference type="InterPro" id="IPR003838">
    <property type="entry name" value="ABC3_permease_C"/>
</dbReference>
<dbReference type="InterPro" id="IPR051447">
    <property type="entry name" value="Lipoprotein-release_system"/>
</dbReference>
<dbReference type="InterPro" id="IPR011925">
    <property type="entry name" value="LolCE_TM"/>
</dbReference>
<dbReference type="InterPro" id="IPR025857">
    <property type="entry name" value="MacB_PCD"/>
</dbReference>
<dbReference type="NCBIfam" id="TIGR02212">
    <property type="entry name" value="lolCE"/>
    <property type="match status" value="1"/>
</dbReference>
<dbReference type="NCBIfam" id="NF008076">
    <property type="entry name" value="PRK10814.1"/>
    <property type="match status" value="1"/>
</dbReference>
<dbReference type="PANTHER" id="PTHR30489:SF8">
    <property type="entry name" value="LIPOPROTEIN-RELEASING SYSTEM TRANSMEMBRANE PROTEIN LOLC"/>
    <property type="match status" value="1"/>
</dbReference>
<dbReference type="PANTHER" id="PTHR30489">
    <property type="entry name" value="LIPOPROTEIN-RELEASING SYSTEM TRANSMEMBRANE PROTEIN LOLE"/>
    <property type="match status" value="1"/>
</dbReference>
<dbReference type="Pfam" id="PF02687">
    <property type="entry name" value="FtsX"/>
    <property type="match status" value="1"/>
</dbReference>
<dbReference type="Pfam" id="PF12704">
    <property type="entry name" value="MacB_PCD"/>
    <property type="match status" value="1"/>
</dbReference>
<comment type="function">
    <text evidence="1">Part of an ATP-dependent transport system LolCDE responsible for the release of lipoproteins targeted to the outer membrane from the inner membrane. Such a release is dependent of the sorting-signal (absence of an Asp at position 2 of the mature lipoprotein) and of LolA (By similarity).</text>
</comment>
<comment type="subcellular location">
    <subcellularLocation>
        <location evidence="1">Cell inner membrane</location>
        <topology evidence="1">Multi-pass membrane protein</topology>
    </subcellularLocation>
</comment>
<comment type="similarity">
    <text evidence="3">Belongs to the ABC-4 integral membrane protein family. LolC/E subfamily.</text>
</comment>
<proteinExistence type="inferred from homology"/>
<sequence length="399" mass="43264">MYQPVALFIGLRYMRGRAADRFGRFVSWLSTIGITLGVMALVTVLSVMNGFERELQNNILGLMPQAILSSEHGSLNPQQLPETAVKLDGVNRVAPITTGDVVLQSARSVAVGVMLGIDPAQKDPLTPYLVNVKQTDLEPGKYNVILGEQLASQLGVNRGDQIRVMVPSASQFTPMGRIPSQRLFNVIGTFAANSEVDGYEMLVNIEDASRLMRYPAGNITGWRLWLDEPLKVDSLSQQKLPEGSKWQDWRDRKGELFQAVRMEKNMMGLLLSLIVAVAAFNIITSLGLMVMEKQGEVAILQTQGLTPRQIMMVFMVQGASAGIIGAILGAALGALLASQLNNLMPIIGVLLDGAALPVAIEPLQVIVIALVAMAIALLSTLYPSWRAAATQPAEALRYE</sequence>
<name>LOLC_ECO57</name>